<comment type="function">
    <text evidence="1">Component of the NOP7 complex, which is required for maturation of the 25S and 5.8S ribosomal RNAs and formation of the 60S ribosome.</text>
</comment>
<comment type="subunit">
    <text evidence="1">Component of the NOP7 complex, composed of ERB1, NOP7 and YTM1. The complex is held together by ERB1, which interacts with NOP7 via its N-terminal domain and with YTM1 via a high-affinity interaction between the seven-bladed beta-propeller domains of the 2 proteins. The NOP7 complex associates with the 66S pre-ribosome.</text>
</comment>
<comment type="subcellular location">
    <subcellularLocation>
        <location evidence="1">Nucleus</location>
        <location evidence="1">Nucleolus</location>
    </subcellularLocation>
    <subcellularLocation>
        <location evidence="1">Nucleus</location>
        <location evidence="1">Nucleoplasm</location>
    </subcellularLocation>
</comment>
<comment type="similarity">
    <text evidence="1">Belongs to the WD repeat BOP1/ERB1 family.</text>
</comment>
<organism>
    <name type="scientific">Chaetomium thermophilum (strain DSM 1495 / CBS 144.50 / IMI 039719)</name>
    <name type="common">Thermochaetoides thermophila</name>
    <dbReference type="NCBI Taxonomy" id="759272"/>
    <lineage>
        <taxon>Eukaryota</taxon>
        <taxon>Fungi</taxon>
        <taxon>Dikarya</taxon>
        <taxon>Ascomycota</taxon>
        <taxon>Pezizomycotina</taxon>
        <taxon>Sordariomycetes</taxon>
        <taxon>Sordariomycetidae</taxon>
        <taxon>Sordariales</taxon>
        <taxon>Chaetomiaceae</taxon>
        <taxon>Thermochaetoides</taxon>
    </lineage>
</organism>
<dbReference type="EMBL" id="GL988045">
    <property type="protein sequence ID" value="EGS19132.1"/>
    <property type="molecule type" value="Genomic_DNA"/>
</dbReference>
<dbReference type="RefSeq" id="XP_006696077.1">
    <property type="nucleotide sequence ID" value="XM_006696014.1"/>
</dbReference>
<dbReference type="PDB" id="5CXB">
    <property type="method" value="X-ray"/>
    <property type="resolution" value="2.10 A"/>
    <property type="chains" value="B=433-801"/>
</dbReference>
<dbReference type="PDB" id="5CXC">
    <property type="method" value="X-ray"/>
    <property type="resolution" value="3.10 A"/>
    <property type="chains" value="B=433-801"/>
</dbReference>
<dbReference type="PDB" id="5CYK">
    <property type="method" value="X-ray"/>
    <property type="resolution" value="3.00 A"/>
    <property type="chains" value="B=433-801"/>
</dbReference>
<dbReference type="PDB" id="5EM2">
    <property type="method" value="X-ray"/>
    <property type="resolution" value="2.67 A"/>
    <property type="chains" value="A/C=423-801"/>
</dbReference>
<dbReference type="PDB" id="8I9P">
    <property type="method" value="EM"/>
    <property type="resolution" value="3.00 A"/>
    <property type="chains" value="CC=1-801"/>
</dbReference>
<dbReference type="PDB" id="8I9R">
    <property type="method" value="EM"/>
    <property type="resolution" value="3.10 A"/>
    <property type="chains" value="CC=1-801"/>
</dbReference>
<dbReference type="PDB" id="8I9T">
    <property type="method" value="EM"/>
    <property type="resolution" value="3.60 A"/>
    <property type="chains" value="CC=1-801"/>
</dbReference>
<dbReference type="PDB" id="8I9V">
    <property type="method" value="EM"/>
    <property type="resolution" value="3.10 A"/>
    <property type="chains" value="CC=1-801"/>
</dbReference>
<dbReference type="PDB" id="8I9W">
    <property type="method" value="EM"/>
    <property type="resolution" value="3.10 A"/>
    <property type="chains" value="CC=1-801"/>
</dbReference>
<dbReference type="PDB" id="8I9X">
    <property type="method" value="EM"/>
    <property type="resolution" value="2.80 A"/>
    <property type="chains" value="CC=1-801"/>
</dbReference>
<dbReference type="PDB" id="8I9Y">
    <property type="method" value="EM"/>
    <property type="resolution" value="3.10 A"/>
    <property type="chains" value="CC=1-801"/>
</dbReference>
<dbReference type="PDB" id="8I9Z">
    <property type="method" value="EM"/>
    <property type="resolution" value="2.70 A"/>
    <property type="chains" value="CC=1-801"/>
</dbReference>
<dbReference type="PDB" id="8IA0">
    <property type="method" value="EM"/>
    <property type="resolution" value="2.70 A"/>
    <property type="chains" value="CC=1-801"/>
</dbReference>
<dbReference type="PDB" id="8PV2">
    <property type="method" value="EM"/>
    <property type="resolution" value="2.63 A"/>
    <property type="chains" value="CC=1-801"/>
</dbReference>
<dbReference type="PDBsum" id="5CXB"/>
<dbReference type="PDBsum" id="5CXC"/>
<dbReference type="PDBsum" id="5CYK"/>
<dbReference type="PDBsum" id="5EM2"/>
<dbReference type="PDBsum" id="8I9P"/>
<dbReference type="PDBsum" id="8I9R"/>
<dbReference type="PDBsum" id="8I9T"/>
<dbReference type="PDBsum" id="8I9V"/>
<dbReference type="PDBsum" id="8I9W"/>
<dbReference type="PDBsum" id="8I9X"/>
<dbReference type="PDBsum" id="8I9Y"/>
<dbReference type="PDBsum" id="8I9Z"/>
<dbReference type="PDBsum" id="8IA0"/>
<dbReference type="PDBsum" id="8PV2"/>
<dbReference type="EMDB" id="EMD-17951"/>
<dbReference type="EMDB" id="EMD-35279"/>
<dbReference type="EMDB" id="EMD-35281"/>
<dbReference type="EMDB" id="EMD-35283"/>
<dbReference type="EMDB" id="EMD-35285"/>
<dbReference type="EMDB" id="EMD-35286"/>
<dbReference type="EMDB" id="EMD-35287"/>
<dbReference type="EMDB" id="EMD-35288"/>
<dbReference type="EMDB" id="EMD-35289"/>
<dbReference type="EMDB" id="EMD-35290"/>
<dbReference type="SMR" id="G0SCK6"/>
<dbReference type="STRING" id="759272.G0SCK6"/>
<dbReference type="GeneID" id="18259795"/>
<dbReference type="KEGG" id="cthr:CTHT_0057570"/>
<dbReference type="eggNOG" id="KOG0650">
    <property type="taxonomic scope" value="Eukaryota"/>
</dbReference>
<dbReference type="HOGENOM" id="CLU_011390_0_1_1"/>
<dbReference type="OMA" id="MRPAKGE"/>
<dbReference type="OrthoDB" id="5571054at2759"/>
<dbReference type="EvolutionaryTrace" id="G0SCK6"/>
<dbReference type="Proteomes" id="UP000008066">
    <property type="component" value="Unassembled WGS sequence"/>
</dbReference>
<dbReference type="GO" id="GO:0005654">
    <property type="term" value="C:nucleoplasm"/>
    <property type="evidence" value="ECO:0007669"/>
    <property type="project" value="UniProtKB-SubCell"/>
</dbReference>
<dbReference type="GO" id="GO:0070545">
    <property type="term" value="C:PeBoW complex"/>
    <property type="evidence" value="ECO:0007669"/>
    <property type="project" value="TreeGrafter"/>
</dbReference>
<dbReference type="GO" id="GO:0030687">
    <property type="term" value="C:preribosome, large subunit precursor"/>
    <property type="evidence" value="ECO:0007669"/>
    <property type="project" value="UniProtKB-UniRule"/>
</dbReference>
<dbReference type="GO" id="GO:0043021">
    <property type="term" value="F:ribonucleoprotein complex binding"/>
    <property type="evidence" value="ECO:0007669"/>
    <property type="project" value="UniProtKB-UniRule"/>
</dbReference>
<dbReference type="GO" id="GO:0000466">
    <property type="term" value="P:maturation of 5.8S rRNA from tricistronic rRNA transcript (SSU-rRNA, 5.8S rRNA, LSU-rRNA)"/>
    <property type="evidence" value="ECO:0007669"/>
    <property type="project" value="UniProtKB-UniRule"/>
</dbReference>
<dbReference type="GO" id="GO:0000463">
    <property type="term" value="P:maturation of LSU-rRNA from tricistronic rRNA transcript (SSU-rRNA, 5.8S rRNA, LSU-rRNA)"/>
    <property type="evidence" value="ECO:0007669"/>
    <property type="project" value="UniProtKB-UniRule"/>
</dbReference>
<dbReference type="FunFam" id="2.130.10.10:FF:000061">
    <property type="entry name" value="Ribosome biogenesis protein BOP1 homolog"/>
    <property type="match status" value="1"/>
</dbReference>
<dbReference type="Gene3D" id="2.130.10.10">
    <property type="entry name" value="YVTN repeat-like/Quinoprotein amine dehydrogenase"/>
    <property type="match status" value="1"/>
</dbReference>
<dbReference type="HAMAP" id="MF_03027">
    <property type="entry name" value="BOP1"/>
    <property type="match status" value="1"/>
</dbReference>
<dbReference type="InterPro" id="IPR028598">
    <property type="entry name" value="BOP1/Erb1"/>
</dbReference>
<dbReference type="InterPro" id="IPR012953">
    <property type="entry name" value="BOP1_N_dom"/>
</dbReference>
<dbReference type="InterPro" id="IPR015943">
    <property type="entry name" value="WD40/YVTN_repeat-like_dom_sf"/>
</dbReference>
<dbReference type="InterPro" id="IPR019775">
    <property type="entry name" value="WD40_repeat_CS"/>
</dbReference>
<dbReference type="InterPro" id="IPR036322">
    <property type="entry name" value="WD40_repeat_dom_sf"/>
</dbReference>
<dbReference type="InterPro" id="IPR001680">
    <property type="entry name" value="WD40_rpt"/>
</dbReference>
<dbReference type="PANTHER" id="PTHR17605:SF0">
    <property type="entry name" value="RIBOSOME BIOGENESIS PROTEIN BOP1"/>
    <property type="match status" value="1"/>
</dbReference>
<dbReference type="PANTHER" id="PTHR17605">
    <property type="entry name" value="RIBOSOME BIOGENESIS PROTEIN BOP1 BLOCK OF PROLIFERATION 1 PROTEIN"/>
    <property type="match status" value="1"/>
</dbReference>
<dbReference type="Pfam" id="PF08145">
    <property type="entry name" value="BOP1NT"/>
    <property type="match status" value="1"/>
</dbReference>
<dbReference type="Pfam" id="PF00400">
    <property type="entry name" value="WD40"/>
    <property type="match status" value="2"/>
</dbReference>
<dbReference type="SMART" id="SM01035">
    <property type="entry name" value="BOP1NT"/>
    <property type="match status" value="1"/>
</dbReference>
<dbReference type="SMART" id="SM00320">
    <property type="entry name" value="WD40"/>
    <property type="match status" value="6"/>
</dbReference>
<dbReference type="SUPFAM" id="SSF50978">
    <property type="entry name" value="WD40 repeat-like"/>
    <property type="match status" value="1"/>
</dbReference>
<dbReference type="PROSITE" id="PS00678">
    <property type="entry name" value="WD_REPEATS_1"/>
    <property type="match status" value="1"/>
</dbReference>
<dbReference type="PROSITE" id="PS50082">
    <property type="entry name" value="WD_REPEATS_2"/>
    <property type="match status" value="2"/>
</dbReference>
<dbReference type="PROSITE" id="PS50294">
    <property type="entry name" value="WD_REPEATS_REGION"/>
    <property type="match status" value="2"/>
</dbReference>
<reference key="1">
    <citation type="journal article" date="2011" name="Cell">
        <title>Insight into structure and assembly of the nuclear pore complex by utilizing the genome of a eukaryotic thermophile.</title>
        <authorList>
            <person name="Amlacher S."/>
            <person name="Sarges P."/>
            <person name="Flemming D."/>
            <person name="van Noort V."/>
            <person name="Kunze R."/>
            <person name="Devos D.P."/>
            <person name="Arumugam M."/>
            <person name="Bork P."/>
            <person name="Hurt E."/>
        </authorList>
    </citation>
    <scope>NUCLEOTIDE SEQUENCE [LARGE SCALE GENOMIC DNA]</scope>
    <source>
        <strain>DSM 1495 / CBS 144.50 / IMI 039719</strain>
    </source>
</reference>
<reference key="2">
    <citation type="journal article" date="2015" name="Nucleic Acids Res.">
        <title>The structure of Erb1-Ytm1 complex reveals the functional importance of a high-affinity binding between two beta-propellers during the assembly of large ribosomal subunits in eukaryotes.</title>
        <authorList>
            <person name="Wegrecki M."/>
            <person name="Rodriguez-Galan O."/>
            <person name="de la Cruz J."/>
            <person name="Bravo J."/>
        </authorList>
    </citation>
    <scope>X-RAY CRYSTALLOGRAPHY (2.10 ANGSTROMS) OF 433-801 IN COMPLEX WITH YTM1</scope>
    <scope>MUTAGENESIS OF ARG-486</scope>
</reference>
<reference key="3">
    <citation type="journal article" date="2016" name="Nucleic Acids Res.">
        <title>Concerted removal of the Erb1-Ytm1 complex in ribosome biogenesis relies on an elaborate interface.</title>
        <authorList>
            <person name="Thoms M."/>
            <person name="Ahmed Y.L."/>
            <person name="Maddi K."/>
            <person name="Hurt E."/>
            <person name="Sinning I."/>
        </authorList>
    </citation>
    <scope>X-RAY CRYSTALLOGRAPHY (2.67 ANGSTROMS) OF 423-801</scope>
</reference>
<feature type="chain" id="PRO_0000435843" description="Ribosome biogenesis protein ERB1">
    <location>
        <begin position="1"/>
        <end position="801"/>
    </location>
</feature>
<feature type="repeat" description="WD 1" evidence="1">
    <location>
        <begin position="451"/>
        <end position="490"/>
    </location>
</feature>
<feature type="repeat" description="WD 2" evidence="1">
    <location>
        <begin position="494"/>
        <end position="534"/>
    </location>
</feature>
<feature type="repeat" description="WD 3" evidence="1">
    <location>
        <begin position="586"/>
        <end position="628"/>
    </location>
</feature>
<feature type="repeat" description="WD 4" evidence="1">
    <location>
        <begin position="631"/>
        <end position="669"/>
    </location>
</feature>
<feature type="repeat" description="WD 5" evidence="1">
    <location>
        <begin position="672"/>
        <end position="711"/>
    </location>
</feature>
<feature type="repeat" description="WD 6" evidence="1">
    <location>
        <begin position="715"/>
        <end position="755"/>
    </location>
</feature>
<feature type="repeat" description="WD 7" evidence="1">
    <location>
        <begin position="771"/>
        <end position="801"/>
    </location>
</feature>
<feature type="region of interest" description="Disordered" evidence="2">
    <location>
        <begin position="1"/>
        <end position="135"/>
    </location>
</feature>
<feature type="region of interest" description="Disordered" evidence="2">
    <location>
        <begin position="358"/>
        <end position="377"/>
    </location>
</feature>
<feature type="region of interest" description="Disordered" evidence="2">
    <location>
        <begin position="546"/>
        <end position="570"/>
    </location>
</feature>
<feature type="compositionally biased region" description="Acidic residues" evidence="2">
    <location>
        <begin position="35"/>
        <end position="90"/>
    </location>
</feature>
<feature type="compositionally biased region" description="Basic and acidic residues" evidence="2">
    <location>
        <begin position="91"/>
        <end position="113"/>
    </location>
</feature>
<feature type="compositionally biased region" description="Basic and acidic residues" evidence="2">
    <location>
        <begin position="124"/>
        <end position="135"/>
    </location>
</feature>
<feature type="compositionally biased region" description="Basic and acidic residues" evidence="2">
    <location>
        <begin position="362"/>
        <end position="377"/>
    </location>
</feature>
<feature type="mutagenesis site" description="Weakens, but does not disrupt the interaction with YTM1." evidence="3">
    <original>R</original>
    <variation>A</variation>
    <location>
        <position position="486"/>
    </location>
</feature>
<feature type="mutagenesis site" description="Disrupts the interaction with YTM1." evidence="3">
    <original>R</original>
    <variation>E</variation>
    <location>
        <position position="486"/>
    </location>
</feature>
<feature type="helix" evidence="4">
    <location>
        <begin position="435"/>
        <end position="438"/>
    </location>
</feature>
<feature type="strand" evidence="4">
    <location>
        <begin position="444"/>
        <end position="449"/>
    </location>
</feature>
<feature type="strand" evidence="4">
    <location>
        <begin position="456"/>
        <end position="461"/>
    </location>
</feature>
<feature type="strand" evidence="4">
    <location>
        <begin position="465"/>
        <end position="472"/>
    </location>
</feature>
<feature type="strand" evidence="4">
    <location>
        <begin position="475"/>
        <end position="481"/>
    </location>
</feature>
<feature type="turn" evidence="4">
    <location>
        <begin position="482"/>
        <end position="484"/>
    </location>
</feature>
<feature type="strand" evidence="4">
    <location>
        <begin position="487"/>
        <end position="493"/>
    </location>
</feature>
<feature type="strand" evidence="7">
    <location>
        <begin position="495"/>
        <end position="497"/>
    </location>
</feature>
<feature type="strand" evidence="4">
    <location>
        <begin position="499"/>
        <end position="504"/>
    </location>
</feature>
<feature type="turn" evidence="6">
    <location>
        <begin position="508"/>
        <end position="510"/>
    </location>
</feature>
<feature type="strand" evidence="4">
    <location>
        <begin position="513"/>
        <end position="517"/>
    </location>
</feature>
<feature type="strand" evidence="4">
    <location>
        <begin position="520"/>
        <end position="524"/>
    </location>
</feature>
<feature type="helix" evidence="4">
    <location>
        <begin position="533"/>
        <end position="544"/>
    </location>
</feature>
<feature type="turn" evidence="7">
    <location>
        <begin position="545"/>
        <end position="548"/>
    </location>
</feature>
<feature type="strand" evidence="4">
    <location>
        <begin position="568"/>
        <end position="570"/>
    </location>
</feature>
<feature type="helix" evidence="4">
    <location>
        <begin position="574"/>
        <end position="578"/>
    </location>
</feature>
<feature type="strand" evidence="4">
    <location>
        <begin position="581"/>
        <end position="586"/>
    </location>
</feature>
<feature type="strand" evidence="4">
    <location>
        <begin position="593"/>
        <end position="596"/>
    </location>
</feature>
<feature type="strand" evidence="4">
    <location>
        <begin position="600"/>
        <end position="606"/>
    </location>
</feature>
<feature type="helix" evidence="4">
    <location>
        <begin position="608"/>
        <end position="610"/>
    </location>
</feature>
<feature type="helix" evidence="7">
    <location>
        <begin position="611"/>
        <end position="613"/>
    </location>
</feature>
<feature type="strand" evidence="4">
    <location>
        <begin position="615"/>
        <end position="619"/>
    </location>
</feature>
<feature type="turn" evidence="4">
    <location>
        <begin position="620"/>
        <end position="623"/>
    </location>
</feature>
<feature type="strand" evidence="4">
    <location>
        <begin position="624"/>
        <end position="626"/>
    </location>
</feature>
<feature type="strand" evidence="4">
    <location>
        <begin position="636"/>
        <end position="641"/>
    </location>
</feature>
<feature type="strand" evidence="4">
    <location>
        <begin position="643"/>
        <end position="654"/>
    </location>
</feature>
<feature type="strand" evidence="4">
    <location>
        <begin position="656"/>
        <end position="660"/>
    </location>
</feature>
<feature type="turn" evidence="4">
    <location>
        <begin position="661"/>
        <end position="664"/>
    </location>
</feature>
<feature type="strand" evidence="4">
    <location>
        <begin position="667"/>
        <end position="670"/>
    </location>
</feature>
<feature type="strand" evidence="4">
    <location>
        <begin position="675"/>
        <end position="682"/>
    </location>
</feature>
<feature type="strand" evidence="4">
    <location>
        <begin position="686"/>
        <end position="693"/>
    </location>
</feature>
<feature type="strand" evidence="4">
    <location>
        <begin position="698"/>
        <end position="702"/>
    </location>
</feature>
<feature type="turn" evidence="4">
    <location>
        <begin position="703"/>
        <end position="705"/>
    </location>
</feature>
<feature type="strand" evidence="4">
    <location>
        <begin position="710"/>
        <end position="713"/>
    </location>
</feature>
<feature type="strand" evidence="4">
    <location>
        <begin position="720"/>
        <end position="725"/>
    </location>
</feature>
<feature type="strand" evidence="7">
    <location>
        <begin position="727"/>
        <end position="729"/>
    </location>
</feature>
<feature type="strand" evidence="4">
    <location>
        <begin position="731"/>
        <end position="737"/>
    </location>
</feature>
<feature type="strand" evidence="4">
    <location>
        <begin position="740"/>
        <end position="748"/>
    </location>
</feature>
<feature type="strand" evidence="5">
    <location>
        <begin position="751"/>
        <end position="755"/>
    </location>
</feature>
<feature type="strand" evidence="4">
    <location>
        <begin position="758"/>
        <end position="766"/>
    </location>
</feature>
<feature type="strand" evidence="4">
    <location>
        <begin position="776"/>
        <end position="781"/>
    </location>
</feature>
<feature type="strand" evidence="4">
    <location>
        <begin position="783"/>
        <end position="786"/>
    </location>
</feature>
<feature type="strand" evidence="4">
    <location>
        <begin position="788"/>
        <end position="792"/>
    </location>
</feature>
<feature type="strand" evidence="4">
    <location>
        <begin position="797"/>
        <end position="801"/>
    </location>
</feature>
<sequence length="801" mass="90721">MGSKIVEKKRKSRDSDSESDNELGDGLFDGVLSQSEDEEDYIPSSEVDEDDDDDADESASEDSDDSNDSEDDEVEEDDEALLSDEIPSEGESEKDQDLAESKESKQDQDKEPSEPEILEPFVDPPRKEDEELEDRNYRIEKDANGGIRYVYDEIDPVYDSDDTDYNVPVNTIGNIPLSFYDSYPHIGYDINGKKIMRPATGDALQNLLDSIEVPEGWTGLTDPNTGKPLNLSRDELELIRKVQQGLIPDDVEDPYPDTVEWFTSVEEKMPLSAAPEPKRRFIPSKNEAKQIMKLVRAIREGRILPYKPPEEREREELEKEEEFYDLWQNEEPQPPNPMHIPAPKLPPPGYDLSYNPPPEYLPTKEEREEWEKMDPEDREKDYLPTKYDSLRKVPAWGNFVKERFERCMDLYLAPRVRKNRLNIDPNSLLPKLPSPDELKPFPTVQQTIFRGHEGRVRSVAIDPTGVALATGGDDGTVRVWELLTGRQVWSVKLNGDEAVNTVRWRPTKDTFILAAAAGEDIFLMIPTHPSVTPALDQASRDILNAGFGHATNGKQQANLPPGKEPPGKWARPGTRLEDEGVLLRITVRSTIKAISWHRRGDHFATVSPSGQRSSVAIHTLSKHLTQIPFRKLNGLAQTASFHPLRPLFFVATQRSIRCYDLQKLELVKIVQPGAKWISSFDVHPGGDNLVVGSYDKRLLWHDLDLSNRPYKTMRFHTEAIRAVRFHKGGLPLFADASDDGSLQIFHGKVPNDQLENPTIVPVKMLKGHKVVNKLGVLDIDWHPREPWCVSAGADGTARLWM</sequence>
<evidence type="ECO:0000255" key="1">
    <source>
        <dbReference type="HAMAP-Rule" id="MF_03027"/>
    </source>
</evidence>
<evidence type="ECO:0000256" key="2">
    <source>
        <dbReference type="SAM" id="MobiDB-lite"/>
    </source>
</evidence>
<evidence type="ECO:0000269" key="3">
    <source>
    </source>
</evidence>
<evidence type="ECO:0007829" key="4">
    <source>
        <dbReference type="PDB" id="5CXB"/>
    </source>
</evidence>
<evidence type="ECO:0007829" key="5">
    <source>
        <dbReference type="PDB" id="5CXC"/>
    </source>
</evidence>
<evidence type="ECO:0007829" key="6">
    <source>
        <dbReference type="PDB" id="5CYK"/>
    </source>
</evidence>
<evidence type="ECO:0007829" key="7">
    <source>
        <dbReference type="PDB" id="5EM2"/>
    </source>
</evidence>
<keyword id="KW-0002">3D-structure</keyword>
<keyword id="KW-0175">Coiled coil</keyword>
<keyword id="KW-0539">Nucleus</keyword>
<keyword id="KW-1185">Reference proteome</keyword>
<keyword id="KW-0677">Repeat</keyword>
<keyword id="KW-0690">Ribosome biogenesis</keyword>
<keyword id="KW-0698">rRNA processing</keyword>
<keyword id="KW-0853">WD repeat</keyword>
<protein>
    <recommendedName>
        <fullName evidence="1">Ribosome biogenesis protein ERB1</fullName>
    </recommendedName>
    <alternativeName>
        <fullName evidence="1">Eukaryotic ribosome biogenesis protein 1</fullName>
    </alternativeName>
</protein>
<name>ERB1_CHATD</name>
<accession>G0SCK6</accession>
<gene>
    <name evidence="1" type="primary">ERB1</name>
    <name type="ORF">CTHT_0057570</name>
</gene>
<proteinExistence type="evidence at protein level"/>